<name>SECA_HELPH</name>
<accession>Q1CT83</accession>
<protein>
    <recommendedName>
        <fullName evidence="1">Protein translocase subunit SecA</fullName>
        <ecNumber evidence="1">7.4.2.8</ecNumber>
    </recommendedName>
</protein>
<feature type="chain" id="PRO_0000320828" description="Protein translocase subunit SecA">
    <location>
        <begin position="1"/>
        <end position="865"/>
    </location>
</feature>
<feature type="binding site" evidence="1">
    <location>
        <position position="93"/>
    </location>
    <ligand>
        <name>ATP</name>
        <dbReference type="ChEBI" id="CHEBI:30616"/>
    </ligand>
</feature>
<feature type="binding site" evidence="1">
    <location>
        <begin position="111"/>
        <end position="115"/>
    </location>
    <ligand>
        <name>ATP</name>
        <dbReference type="ChEBI" id="CHEBI:30616"/>
    </ligand>
</feature>
<feature type="binding site" evidence="1">
    <location>
        <position position="501"/>
    </location>
    <ligand>
        <name>ATP</name>
        <dbReference type="ChEBI" id="CHEBI:30616"/>
    </ligand>
</feature>
<feature type="binding site" evidence="1">
    <location>
        <position position="841"/>
    </location>
    <ligand>
        <name>Zn(2+)</name>
        <dbReference type="ChEBI" id="CHEBI:29105"/>
    </ligand>
</feature>
<feature type="binding site" evidence="1">
    <location>
        <position position="843"/>
    </location>
    <ligand>
        <name>Zn(2+)</name>
        <dbReference type="ChEBI" id="CHEBI:29105"/>
    </ligand>
</feature>
<feature type="binding site" evidence="1">
    <location>
        <position position="852"/>
    </location>
    <ligand>
        <name>Zn(2+)</name>
        <dbReference type="ChEBI" id="CHEBI:29105"/>
    </ligand>
</feature>
<feature type="binding site" evidence="1">
    <location>
        <position position="853"/>
    </location>
    <ligand>
        <name>Zn(2+)</name>
        <dbReference type="ChEBI" id="CHEBI:29105"/>
    </ligand>
</feature>
<sequence>MIKAIIGKIIGTRNDRWIKQYKKQVLTINALEPTYEKMSDVELQNAFEELKKRVRSTEKNLQEKTLLEVLPESFAITREASKRILKMRHFDVQLIGGMVLNDGKIAEMKTGEGKTLVATLAVALNALKGESVYVVTVNDYLAHRDSKEMEPLYHFLGYSVGTITASVRDDDERLEIYSKDIVYGTNNEFGFDYLRDNMKYSLEHKVQKSHAFAIVDEVDSILIDEARTPLIISGPVDRRMENYNKADEVAKSMQVETDFTIDEKNRTILITEEGIKKAENLFGVDNLYKIENAALSHHLDQALKANYLFFIDKDYIVANNEVVIVDEFTGRLSEGRRFSEGLHQALEAKEGVSIKEESQTLADITFQNYFRMFSKLSGMTGTAQTEATEFLEIYNLEVVSIPTNLAIKRKDLNDLIYKSEKEKFDAVILKIKELHDKGQPVLVGTASIEKSETLHALLKKERIPHTVLNAKQHTKEAEIIKDAGLKGAVTIATNMAGRGVDIKLTDEIKELGGLYIIGTERHESRRIDNQLRGRSGRQGDPGTSQFYLSLEDNLLRIFGSDRIKGVMEKLGLKDGEHIESKLVTRAVENAQKKVENLHFESRKHLLEYDDVANEQRKSVYKFRDELLDINYDISAKIAENREYALNQIFSKLKAFDHQNLSEEELLGLKNVLKEDFNAHVELEDLEKASPIEKFVAEKLKSDYENKMKVLDSEQRSRIERIVYLQILDNAWREHLYTMDNLKTGINLRGYNQKDPLVEYKKESYNLFLEFIEDIKIEAIKTFSKIQFENEQDSSDAERYLDNFSEEREHESVTYRHEETLDEDLNVAMKAFSKTPKRNEPCPCQSGKKYKDCCAKSGPKKGLFAK</sequence>
<proteinExistence type="inferred from homology"/>
<evidence type="ECO:0000255" key="1">
    <source>
        <dbReference type="HAMAP-Rule" id="MF_01382"/>
    </source>
</evidence>
<reference key="1">
    <citation type="journal article" date="2006" name="Proc. Natl. Acad. Sci. U.S.A.">
        <title>The complete genome sequence of a chronic atrophic gastritis Helicobacter pylori strain: evolution during disease progression.</title>
        <authorList>
            <person name="Oh J.D."/>
            <person name="Kling-Baeckhed H."/>
            <person name="Giannakis M."/>
            <person name="Xu J."/>
            <person name="Fulton R.S."/>
            <person name="Fulton L.A."/>
            <person name="Cordum H.S."/>
            <person name="Wang C."/>
            <person name="Elliott G."/>
            <person name="Edwards J."/>
            <person name="Mardis E.R."/>
            <person name="Engstrand L.G."/>
            <person name="Gordon J.I."/>
        </authorList>
    </citation>
    <scope>NUCLEOTIDE SEQUENCE [LARGE SCALE GENOMIC DNA]</scope>
    <source>
        <strain>HPAG1</strain>
    </source>
</reference>
<dbReference type="EC" id="7.4.2.8" evidence="1"/>
<dbReference type="EMBL" id="CP000241">
    <property type="protein sequence ID" value="ABF84839.1"/>
    <property type="molecule type" value="Genomic_DNA"/>
</dbReference>
<dbReference type="RefSeq" id="WP_000588187.1">
    <property type="nucleotide sequence ID" value="NC_008086.1"/>
</dbReference>
<dbReference type="SMR" id="Q1CT83"/>
<dbReference type="KEGG" id="hpa:HPAG1_0772"/>
<dbReference type="HOGENOM" id="CLU_005314_3_0_7"/>
<dbReference type="GO" id="GO:0031522">
    <property type="term" value="C:cell envelope Sec protein transport complex"/>
    <property type="evidence" value="ECO:0007669"/>
    <property type="project" value="TreeGrafter"/>
</dbReference>
<dbReference type="GO" id="GO:0005829">
    <property type="term" value="C:cytosol"/>
    <property type="evidence" value="ECO:0007669"/>
    <property type="project" value="TreeGrafter"/>
</dbReference>
<dbReference type="GO" id="GO:0005886">
    <property type="term" value="C:plasma membrane"/>
    <property type="evidence" value="ECO:0007669"/>
    <property type="project" value="UniProtKB-SubCell"/>
</dbReference>
<dbReference type="GO" id="GO:0005524">
    <property type="term" value="F:ATP binding"/>
    <property type="evidence" value="ECO:0007669"/>
    <property type="project" value="UniProtKB-UniRule"/>
</dbReference>
<dbReference type="GO" id="GO:0046872">
    <property type="term" value="F:metal ion binding"/>
    <property type="evidence" value="ECO:0007669"/>
    <property type="project" value="UniProtKB-KW"/>
</dbReference>
<dbReference type="GO" id="GO:0008564">
    <property type="term" value="F:protein-exporting ATPase activity"/>
    <property type="evidence" value="ECO:0007669"/>
    <property type="project" value="UniProtKB-EC"/>
</dbReference>
<dbReference type="GO" id="GO:0065002">
    <property type="term" value="P:intracellular protein transmembrane transport"/>
    <property type="evidence" value="ECO:0007669"/>
    <property type="project" value="UniProtKB-UniRule"/>
</dbReference>
<dbReference type="GO" id="GO:0017038">
    <property type="term" value="P:protein import"/>
    <property type="evidence" value="ECO:0007669"/>
    <property type="project" value="InterPro"/>
</dbReference>
<dbReference type="GO" id="GO:0006605">
    <property type="term" value="P:protein targeting"/>
    <property type="evidence" value="ECO:0007669"/>
    <property type="project" value="UniProtKB-UniRule"/>
</dbReference>
<dbReference type="GO" id="GO:0043952">
    <property type="term" value="P:protein transport by the Sec complex"/>
    <property type="evidence" value="ECO:0007669"/>
    <property type="project" value="TreeGrafter"/>
</dbReference>
<dbReference type="CDD" id="cd17928">
    <property type="entry name" value="DEXDc_SecA"/>
    <property type="match status" value="1"/>
</dbReference>
<dbReference type="CDD" id="cd18803">
    <property type="entry name" value="SF2_C_secA"/>
    <property type="match status" value="1"/>
</dbReference>
<dbReference type="FunFam" id="3.40.50.300:FF:000429">
    <property type="entry name" value="Preprotein translocase subunit SecA"/>
    <property type="match status" value="1"/>
</dbReference>
<dbReference type="FunFam" id="3.90.1440.10:FF:000001">
    <property type="entry name" value="Preprotein translocase subunit SecA"/>
    <property type="match status" value="1"/>
</dbReference>
<dbReference type="FunFam" id="1.10.3060.10:FF:000012">
    <property type="entry name" value="Protein translocase subunit SecA"/>
    <property type="match status" value="1"/>
</dbReference>
<dbReference type="Gene3D" id="1.10.3060.10">
    <property type="entry name" value="Helical scaffold and wing domains of SecA"/>
    <property type="match status" value="1"/>
</dbReference>
<dbReference type="Gene3D" id="3.40.50.300">
    <property type="entry name" value="P-loop containing nucleotide triphosphate hydrolases"/>
    <property type="match status" value="3"/>
</dbReference>
<dbReference type="Gene3D" id="3.90.1440.10">
    <property type="entry name" value="SecA, preprotein cross-linking domain"/>
    <property type="match status" value="1"/>
</dbReference>
<dbReference type="HAMAP" id="MF_01382">
    <property type="entry name" value="SecA"/>
    <property type="match status" value="1"/>
</dbReference>
<dbReference type="InterPro" id="IPR014001">
    <property type="entry name" value="Helicase_ATP-bd"/>
</dbReference>
<dbReference type="InterPro" id="IPR001650">
    <property type="entry name" value="Helicase_C-like"/>
</dbReference>
<dbReference type="InterPro" id="IPR027417">
    <property type="entry name" value="P-loop_NTPase"/>
</dbReference>
<dbReference type="InterPro" id="IPR004027">
    <property type="entry name" value="SEC_C_motif"/>
</dbReference>
<dbReference type="InterPro" id="IPR000185">
    <property type="entry name" value="SecA"/>
</dbReference>
<dbReference type="InterPro" id="IPR020937">
    <property type="entry name" value="SecA_CS"/>
</dbReference>
<dbReference type="InterPro" id="IPR011115">
    <property type="entry name" value="SecA_DEAD"/>
</dbReference>
<dbReference type="InterPro" id="IPR014018">
    <property type="entry name" value="SecA_motor_DEAD"/>
</dbReference>
<dbReference type="InterPro" id="IPR011130">
    <property type="entry name" value="SecA_preprotein_X-link_dom"/>
</dbReference>
<dbReference type="InterPro" id="IPR044722">
    <property type="entry name" value="SecA_SF2_C"/>
</dbReference>
<dbReference type="InterPro" id="IPR011116">
    <property type="entry name" value="SecA_Wing/Scaffold"/>
</dbReference>
<dbReference type="InterPro" id="IPR036266">
    <property type="entry name" value="SecA_Wing/Scaffold_sf"/>
</dbReference>
<dbReference type="InterPro" id="IPR036670">
    <property type="entry name" value="SecA_X-link_sf"/>
</dbReference>
<dbReference type="NCBIfam" id="NF006630">
    <property type="entry name" value="PRK09200.1"/>
    <property type="match status" value="1"/>
</dbReference>
<dbReference type="NCBIfam" id="TIGR00963">
    <property type="entry name" value="secA"/>
    <property type="match status" value="1"/>
</dbReference>
<dbReference type="PANTHER" id="PTHR30612:SF0">
    <property type="entry name" value="CHLOROPLAST PROTEIN-TRANSPORTING ATPASE"/>
    <property type="match status" value="1"/>
</dbReference>
<dbReference type="PANTHER" id="PTHR30612">
    <property type="entry name" value="SECA INNER MEMBRANE COMPONENT OF SEC PROTEIN SECRETION SYSTEM"/>
    <property type="match status" value="1"/>
</dbReference>
<dbReference type="Pfam" id="PF21090">
    <property type="entry name" value="P-loop_SecA"/>
    <property type="match status" value="1"/>
</dbReference>
<dbReference type="Pfam" id="PF02810">
    <property type="entry name" value="SEC-C"/>
    <property type="match status" value="1"/>
</dbReference>
<dbReference type="Pfam" id="PF07517">
    <property type="entry name" value="SecA_DEAD"/>
    <property type="match status" value="1"/>
</dbReference>
<dbReference type="Pfam" id="PF01043">
    <property type="entry name" value="SecA_PP_bind"/>
    <property type="match status" value="1"/>
</dbReference>
<dbReference type="Pfam" id="PF07516">
    <property type="entry name" value="SecA_SW"/>
    <property type="match status" value="1"/>
</dbReference>
<dbReference type="PRINTS" id="PR00906">
    <property type="entry name" value="SECA"/>
</dbReference>
<dbReference type="SMART" id="SM00957">
    <property type="entry name" value="SecA_DEAD"/>
    <property type="match status" value="1"/>
</dbReference>
<dbReference type="SMART" id="SM00958">
    <property type="entry name" value="SecA_PP_bind"/>
    <property type="match status" value="1"/>
</dbReference>
<dbReference type="SUPFAM" id="SSF81886">
    <property type="entry name" value="Helical scaffold and wing domains of SecA"/>
    <property type="match status" value="1"/>
</dbReference>
<dbReference type="SUPFAM" id="SSF52540">
    <property type="entry name" value="P-loop containing nucleoside triphosphate hydrolases"/>
    <property type="match status" value="2"/>
</dbReference>
<dbReference type="SUPFAM" id="SSF81767">
    <property type="entry name" value="Pre-protein crosslinking domain of SecA"/>
    <property type="match status" value="1"/>
</dbReference>
<dbReference type="PROSITE" id="PS01312">
    <property type="entry name" value="SECA"/>
    <property type="match status" value="1"/>
</dbReference>
<dbReference type="PROSITE" id="PS51196">
    <property type="entry name" value="SECA_MOTOR_DEAD"/>
    <property type="match status" value="1"/>
</dbReference>
<keyword id="KW-0067">ATP-binding</keyword>
<keyword id="KW-0997">Cell inner membrane</keyword>
<keyword id="KW-1003">Cell membrane</keyword>
<keyword id="KW-0963">Cytoplasm</keyword>
<keyword id="KW-0472">Membrane</keyword>
<keyword id="KW-0479">Metal-binding</keyword>
<keyword id="KW-0547">Nucleotide-binding</keyword>
<keyword id="KW-0653">Protein transport</keyword>
<keyword id="KW-1278">Translocase</keyword>
<keyword id="KW-0811">Translocation</keyword>
<keyword id="KW-0813">Transport</keyword>
<keyword id="KW-0862">Zinc</keyword>
<organism>
    <name type="scientific">Helicobacter pylori (strain HPAG1)</name>
    <dbReference type="NCBI Taxonomy" id="357544"/>
    <lineage>
        <taxon>Bacteria</taxon>
        <taxon>Pseudomonadati</taxon>
        <taxon>Campylobacterota</taxon>
        <taxon>Epsilonproteobacteria</taxon>
        <taxon>Campylobacterales</taxon>
        <taxon>Helicobacteraceae</taxon>
        <taxon>Helicobacter</taxon>
    </lineage>
</organism>
<comment type="function">
    <text evidence="1">Part of the Sec protein translocase complex. Interacts with the SecYEG preprotein conducting channel. Has a central role in coupling the hydrolysis of ATP to the transfer of proteins into and across the cell membrane, serving as an ATP-driven molecular motor driving the stepwise translocation of polypeptide chains across the membrane.</text>
</comment>
<comment type="catalytic activity">
    <reaction evidence="1">
        <text>ATP + H2O + cellular proteinSide 1 = ADP + phosphate + cellular proteinSide 2.</text>
        <dbReference type="EC" id="7.4.2.8"/>
    </reaction>
</comment>
<comment type="cofactor">
    <cofactor evidence="1">
        <name>Zn(2+)</name>
        <dbReference type="ChEBI" id="CHEBI:29105"/>
    </cofactor>
    <text evidence="1">May bind 1 zinc ion per subunit.</text>
</comment>
<comment type="subunit">
    <text evidence="1">Monomer and homodimer. Part of the essential Sec protein translocation apparatus which comprises SecA, SecYEG and auxiliary proteins SecDF-YajC and YidC.</text>
</comment>
<comment type="subcellular location">
    <subcellularLocation>
        <location evidence="1">Cell inner membrane</location>
        <topology evidence="1">Peripheral membrane protein</topology>
        <orientation evidence="1">Cytoplasmic side</orientation>
    </subcellularLocation>
    <subcellularLocation>
        <location evidence="1">Cytoplasm</location>
    </subcellularLocation>
    <text evidence="1">Distribution is 50-50.</text>
</comment>
<comment type="similarity">
    <text evidence="1">Belongs to the SecA family.</text>
</comment>
<gene>
    <name evidence="1" type="primary">secA</name>
    <name type="ordered locus">HPAG1_0772</name>
</gene>